<organism>
    <name type="scientific">Escherichia coli (strain K12 / DH10B)</name>
    <dbReference type="NCBI Taxonomy" id="316385"/>
    <lineage>
        <taxon>Bacteria</taxon>
        <taxon>Pseudomonadati</taxon>
        <taxon>Pseudomonadota</taxon>
        <taxon>Gammaproteobacteria</taxon>
        <taxon>Enterobacterales</taxon>
        <taxon>Enterobacteriaceae</taxon>
        <taxon>Escherichia</taxon>
    </lineage>
</organism>
<gene>
    <name evidence="1" type="primary">nudC</name>
    <name type="ordered locus">ECDH10B_4185</name>
</gene>
<accession>B1XBZ9</accession>
<name>NUDC_ECODH</name>
<feature type="chain" id="PRO_1000115241" description="NAD-capped RNA hydrolase NudC">
    <location>
        <begin position="1"/>
        <end position="257"/>
    </location>
</feature>
<feature type="domain" description="Nudix hydrolase" evidence="1">
    <location>
        <begin position="125"/>
        <end position="248"/>
    </location>
</feature>
<feature type="short sequence motif" description="Nudix box" evidence="1">
    <location>
        <begin position="159"/>
        <end position="180"/>
    </location>
</feature>
<feature type="binding site" evidence="1">
    <location>
        <position position="25"/>
    </location>
    <ligand>
        <name>substrate</name>
    </ligand>
</feature>
<feature type="binding site" evidence="1">
    <location>
        <position position="69"/>
    </location>
    <ligand>
        <name>substrate</name>
    </ligand>
</feature>
<feature type="binding site" evidence="1">
    <location>
        <position position="98"/>
    </location>
    <ligand>
        <name>Zn(2+)</name>
        <dbReference type="ChEBI" id="CHEBI:29105"/>
    </ligand>
</feature>
<feature type="binding site" evidence="1">
    <location>
        <position position="101"/>
    </location>
    <ligand>
        <name>Zn(2+)</name>
        <dbReference type="ChEBI" id="CHEBI:29105"/>
    </ligand>
</feature>
<feature type="binding site" evidence="1">
    <location>
        <position position="111"/>
    </location>
    <ligand>
        <name>substrate</name>
    </ligand>
</feature>
<feature type="binding site" evidence="1">
    <location>
        <position position="116"/>
    </location>
    <ligand>
        <name>Zn(2+)</name>
        <dbReference type="ChEBI" id="CHEBI:29105"/>
    </ligand>
</feature>
<feature type="binding site" evidence="1">
    <location>
        <position position="119"/>
    </location>
    <ligand>
        <name>Zn(2+)</name>
        <dbReference type="ChEBI" id="CHEBI:29105"/>
    </ligand>
</feature>
<feature type="binding site" evidence="1">
    <location>
        <position position="124"/>
    </location>
    <ligand>
        <name>substrate</name>
    </ligand>
</feature>
<feature type="binding site" evidence="1">
    <location>
        <position position="158"/>
    </location>
    <ligand>
        <name>a divalent metal cation</name>
        <dbReference type="ChEBI" id="CHEBI:60240"/>
        <label>1</label>
    </ligand>
</feature>
<feature type="binding site" evidence="1">
    <location>
        <position position="174"/>
    </location>
    <ligand>
        <name>a divalent metal cation</name>
        <dbReference type="ChEBI" id="CHEBI:60240"/>
        <label>2</label>
    </ligand>
</feature>
<feature type="binding site" evidence="1">
    <location>
        <position position="174"/>
    </location>
    <ligand>
        <name>a divalent metal cation</name>
        <dbReference type="ChEBI" id="CHEBI:60240"/>
        <label>3</label>
    </ligand>
</feature>
<feature type="binding site" evidence="1">
    <location>
        <position position="178"/>
    </location>
    <ligand>
        <name>a divalent metal cation</name>
        <dbReference type="ChEBI" id="CHEBI:60240"/>
        <label>1</label>
    </ligand>
</feature>
<feature type="binding site" evidence="1">
    <location>
        <position position="178"/>
    </location>
    <ligand>
        <name>a divalent metal cation</name>
        <dbReference type="ChEBI" id="CHEBI:60240"/>
        <label>3</label>
    </ligand>
</feature>
<feature type="binding site" evidence="1">
    <location>
        <begin position="192"/>
        <end position="199"/>
    </location>
    <ligand>
        <name>substrate</name>
    </ligand>
</feature>
<feature type="binding site" evidence="1">
    <location>
        <position position="219"/>
    </location>
    <ligand>
        <name>a divalent metal cation</name>
        <dbReference type="ChEBI" id="CHEBI:60240"/>
        <label>1</label>
    </ligand>
</feature>
<feature type="binding site" evidence="1">
    <location>
        <position position="219"/>
    </location>
    <ligand>
        <name>a divalent metal cation</name>
        <dbReference type="ChEBI" id="CHEBI:60240"/>
        <label>3</label>
    </ligand>
</feature>
<feature type="binding site" evidence="1">
    <location>
        <position position="241"/>
    </location>
    <ligand>
        <name>substrate</name>
    </ligand>
</feature>
<proteinExistence type="inferred from homology"/>
<protein>
    <recommendedName>
        <fullName evidence="1">NAD-capped RNA hydrolase NudC</fullName>
        <shortName evidence="1">DeNADding enzyme NudC</shortName>
        <ecNumber evidence="1">3.6.1.-</ecNumber>
    </recommendedName>
    <alternativeName>
        <fullName evidence="1">NADH pyrophosphatase</fullName>
        <ecNumber evidence="1">3.6.1.22</ecNumber>
    </alternativeName>
</protein>
<dbReference type="EC" id="3.6.1.-" evidence="1"/>
<dbReference type="EC" id="3.6.1.22" evidence="1"/>
<dbReference type="EMBL" id="CP000948">
    <property type="protein sequence ID" value="ACB04999.1"/>
    <property type="molecule type" value="Genomic_DNA"/>
</dbReference>
<dbReference type="RefSeq" id="WP_000373940.1">
    <property type="nucleotide sequence ID" value="NC_010473.1"/>
</dbReference>
<dbReference type="SMR" id="B1XBZ9"/>
<dbReference type="GeneID" id="93777898"/>
<dbReference type="KEGG" id="ecd:ECDH10B_4185"/>
<dbReference type="HOGENOM" id="CLU_037162_0_1_6"/>
<dbReference type="GO" id="GO:0005829">
    <property type="term" value="C:cytosol"/>
    <property type="evidence" value="ECO:0007669"/>
    <property type="project" value="TreeGrafter"/>
</dbReference>
<dbReference type="GO" id="GO:0000287">
    <property type="term" value="F:magnesium ion binding"/>
    <property type="evidence" value="ECO:0007669"/>
    <property type="project" value="UniProtKB-UniRule"/>
</dbReference>
<dbReference type="GO" id="GO:0030145">
    <property type="term" value="F:manganese ion binding"/>
    <property type="evidence" value="ECO:0007669"/>
    <property type="project" value="UniProtKB-UniRule"/>
</dbReference>
<dbReference type="GO" id="GO:0000210">
    <property type="term" value="F:NAD+ diphosphatase activity"/>
    <property type="evidence" value="ECO:0007669"/>
    <property type="project" value="UniProtKB-UniRule"/>
</dbReference>
<dbReference type="GO" id="GO:0035529">
    <property type="term" value="F:NADH pyrophosphatase activity"/>
    <property type="evidence" value="ECO:0007669"/>
    <property type="project" value="TreeGrafter"/>
</dbReference>
<dbReference type="GO" id="GO:0110153">
    <property type="term" value="F:RNA NAD-cap (NMN-forming) hydrolase activity"/>
    <property type="evidence" value="ECO:0007669"/>
    <property type="project" value="RHEA"/>
</dbReference>
<dbReference type="GO" id="GO:0008270">
    <property type="term" value="F:zinc ion binding"/>
    <property type="evidence" value="ECO:0007669"/>
    <property type="project" value="UniProtKB-UniRule"/>
</dbReference>
<dbReference type="GO" id="GO:0019677">
    <property type="term" value="P:NAD catabolic process"/>
    <property type="evidence" value="ECO:0007669"/>
    <property type="project" value="TreeGrafter"/>
</dbReference>
<dbReference type="GO" id="GO:0006734">
    <property type="term" value="P:NADH metabolic process"/>
    <property type="evidence" value="ECO:0007669"/>
    <property type="project" value="TreeGrafter"/>
</dbReference>
<dbReference type="GO" id="GO:0006742">
    <property type="term" value="P:NADP catabolic process"/>
    <property type="evidence" value="ECO:0007669"/>
    <property type="project" value="TreeGrafter"/>
</dbReference>
<dbReference type="CDD" id="cd03429">
    <property type="entry name" value="NUDIX_NADH_pyrophosphatase_Nudt13"/>
    <property type="match status" value="1"/>
</dbReference>
<dbReference type="FunFam" id="3.90.79.10:FF:000004">
    <property type="entry name" value="NADH pyrophosphatase"/>
    <property type="match status" value="1"/>
</dbReference>
<dbReference type="FunFam" id="3.90.79.20:FF:000001">
    <property type="entry name" value="NADH pyrophosphatase"/>
    <property type="match status" value="1"/>
</dbReference>
<dbReference type="Gene3D" id="3.90.79.20">
    <property type="match status" value="1"/>
</dbReference>
<dbReference type="Gene3D" id="3.90.79.10">
    <property type="entry name" value="Nucleoside Triphosphate Pyrophosphohydrolase"/>
    <property type="match status" value="1"/>
</dbReference>
<dbReference type="HAMAP" id="MF_00297">
    <property type="entry name" value="Nudix_NudC"/>
    <property type="match status" value="1"/>
</dbReference>
<dbReference type="InterPro" id="IPR050241">
    <property type="entry name" value="NAD-cap_RNA_hydrolase_NudC"/>
</dbReference>
<dbReference type="InterPro" id="IPR049734">
    <property type="entry name" value="NudC-like_C"/>
</dbReference>
<dbReference type="InterPro" id="IPR015797">
    <property type="entry name" value="NUDIX_hydrolase-like_dom_sf"/>
</dbReference>
<dbReference type="InterPro" id="IPR020084">
    <property type="entry name" value="NUDIX_hydrolase_CS"/>
</dbReference>
<dbReference type="InterPro" id="IPR000086">
    <property type="entry name" value="NUDIX_hydrolase_dom"/>
</dbReference>
<dbReference type="InterPro" id="IPR022925">
    <property type="entry name" value="RNA_Hydrolase_NudC"/>
</dbReference>
<dbReference type="InterPro" id="IPR015376">
    <property type="entry name" value="Znr_NADH_PPase"/>
</dbReference>
<dbReference type="NCBIfam" id="NF001299">
    <property type="entry name" value="PRK00241.1"/>
    <property type="match status" value="1"/>
</dbReference>
<dbReference type="PANTHER" id="PTHR42904:SF6">
    <property type="entry name" value="NAD-CAPPED RNA HYDROLASE NUDT12"/>
    <property type="match status" value="1"/>
</dbReference>
<dbReference type="PANTHER" id="PTHR42904">
    <property type="entry name" value="NUDIX HYDROLASE, NUDC SUBFAMILY"/>
    <property type="match status" value="1"/>
</dbReference>
<dbReference type="Pfam" id="PF00293">
    <property type="entry name" value="NUDIX"/>
    <property type="match status" value="1"/>
</dbReference>
<dbReference type="Pfam" id="PF09297">
    <property type="entry name" value="Zn_ribbon_NUD"/>
    <property type="match status" value="1"/>
</dbReference>
<dbReference type="SUPFAM" id="SSF55811">
    <property type="entry name" value="Nudix"/>
    <property type="match status" value="2"/>
</dbReference>
<dbReference type="PROSITE" id="PS51462">
    <property type="entry name" value="NUDIX"/>
    <property type="match status" value="1"/>
</dbReference>
<dbReference type="PROSITE" id="PS00893">
    <property type="entry name" value="NUDIX_BOX"/>
    <property type="match status" value="1"/>
</dbReference>
<keyword id="KW-0378">Hydrolase</keyword>
<keyword id="KW-0460">Magnesium</keyword>
<keyword id="KW-0464">Manganese</keyword>
<keyword id="KW-0479">Metal-binding</keyword>
<keyword id="KW-0520">NAD</keyword>
<keyword id="KW-0862">Zinc</keyword>
<reference key="1">
    <citation type="journal article" date="2008" name="J. Bacteriol.">
        <title>The complete genome sequence of Escherichia coli DH10B: insights into the biology of a laboratory workhorse.</title>
        <authorList>
            <person name="Durfee T."/>
            <person name="Nelson R."/>
            <person name="Baldwin S."/>
            <person name="Plunkett G. III"/>
            <person name="Burland V."/>
            <person name="Mau B."/>
            <person name="Petrosino J.F."/>
            <person name="Qin X."/>
            <person name="Muzny D.M."/>
            <person name="Ayele M."/>
            <person name="Gibbs R.A."/>
            <person name="Csorgo B."/>
            <person name="Posfai G."/>
            <person name="Weinstock G.M."/>
            <person name="Blattner F.R."/>
        </authorList>
    </citation>
    <scope>NUCLEOTIDE SEQUENCE [LARGE SCALE GENOMIC DNA]</scope>
    <source>
        <strain>K12 / DH10B</strain>
    </source>
</reference>
<sequence length="257" mass="29689">MDRIIEKLDHGWWVVSHEQKLWLPKGELPYGEAANFDLVGQRALQIGEWQGEPVWLVQQQRRHDMGSVRQVIDLDVGLFQLAGRGVQLAEFYRSHKYCGYCGHEMYPSKTEWAMLCSHCRERYYPQIAPCIIVAIRRDDSILLAQHTRHRNGVHTVLAGFVEVGETLEQAVAREVMEESGIKVKNLRYVTSQPWPFPQSLMTAFMAEYDSGDIVIDPKELLEANWYRYDDLPLLPPPGTVARRLIEDTVAMCRAEYE</sequence>
<evidence type="ECO:0000255" key="1">
    <source>
        <dbReference type="HAMAP-Rule" id="MF_00297"/>
    </source>
</evidence>
<comment type="function">
    <text evidence="1">mRNA decapping enzyme that specifically removes the nicotinamide adenine dinucleotide (NAD) cap from a subset of mRNAs by hydrolyzing the diphosphate linkage to produce nicotinamide mononucleotide (NMN) and 5' monophosphate mRNA. The NAD-cap is present at the 5'-end of some mRNAs and stabilizes RNA against 5'-processing. Has preference for mRNAs with a 5'-end purine. Catalyzes the hydrolysis of a broad range of dinucleotide pyrophosphates.</text>
</comment>
<comment type="catalytic activity">
    <reaction evidence="1">
        <text>a 5'-end NAD(+)-phospho-ribonucleoside in mRNA + H2O = a 5'-end phospho-adenosine-phospho-ribonucleoside in mRNA + beta-nicotinamide D-ribonucleotide + 2 H(+)</text>
        <dbReference type="Rhea" id="RHEA:60876"/>
        <dbReference type="Rhea" id="RHEA-COMP:15698"/>
        <dbReference type="Rhea" id="RHEA-COMP:15719"/>
        <dbReference type="ChEBI" id="CHEBI:14649"/>
        <dbReference type="ChEBI" id="CHEBI:15377"/>
        <dbReference type="ChEBI" id="CHEBI:15378"/>
        <dbReference type="ChEBI" id="CHEBI:144029"/>
        <dbReference type="ChEBI" id="CHEBI:144051"/>
    </reaction>
    <physiologicalReaction direction="left-to-right" evidence="1">
        <dbReference type="Rhea" id="RHEA:60877"/>
    </physiologicalReaction>
</comment>
<comment type="catalytic activity">
    <reaction evidence="1">
        <text>NAD(+) + H2O = beta-nicotinamide D-ribonucleotide + AMP + 2 H(+)</text>
        <dbReference type="Rhea" id="RHEA:11800"/>
        <dbReference type="ChEBI" id="CHEBI:14649"/>
        <dbReference type="ChEBI" id="CHEBI:15377"/>
        <dbReference type="ChEBI" id="CHEBI:15378"/>
        <dbReference type="ChEBI" id="CHEBI:57540"/>
        <dbReference type="ChEBI" id="CHEBI:456215"/>
        <dbReference type="EC" id="3.6.1.22"/>
    </reaction>
</comment>
<comment type="catalytic activity">
    <reaction evidence="1">
        <text>NADH + H2O = reduced beta-nicotinamide D-ribonucleotide + AMP + 2 H(+)</text>
        <dbReference type="Rhea" id="RHEA:48868"/>
        <dbReference type="ChEBI" id="CHEBI:15377"/>
        <dbReference type="ChEBI" id="CHEBI:15378"/>
        <dbReference type="ChEBI" id="CHEBI:57945"/>
        <dbReference type="ChEBI" id="CHEBI:90832"/>
        <dbReference type="ChEBI" id="CHEBI:456215"/>
        <dbReference type="EC" id="3.6.1.22"/>
    </reaction>
</comment>
<comment type="cofactor">
    <cofactor evidence="1">
        <name>Mg(2+)</name>
        <dbReference type="ChEBI" id="CHEBI:18420"/>
    </cofactor>
    <cofactor evidence="1">
        <name>Mn(2+)</name>
        <dbReference type="ChEBI" id="CHEBI:29035"/>
    </cofactor>
    <text evidence="1">Divalent metal cations. Mg(2+) or Mn(2+).</text>
</comment>
<comment type="cofactor">
    <cofactor evidence="1">
        <name>Zn(2+)</name>
        <dbReference type="ChEBI" id="CHEBI:29105"/>
    </cofactor>
    <text evidence="1">Binds 1 zinc ion per subunit.</text>
</comment>
<comment type="subunit">
    <text evidence="1">Homodimer.</text>
</comment>
<comment type="similarity">
    <text evidence="1">Belongs to the Nudix hydrolase family. NudC subfamily.</text>
</comment>